<accession>Q70RW7</accession>
<geneLocation type="mitochondrion"/>
<dbReference type="EC" id="7.1.1.2"/>
<dbReference type="EMBL" id="AJ554056">
    <property type="protein sequence ID" value="CAD87957.1"/>
    <property type="molecule type" value="Genomic_DNA"/>
</dbReference>
<dbReference type="RefSeq" id="NP_944680.1">
    <property type="nucleotide sequence ID" value="NC_005273.1"/>
</dbReference>
<dbReference type="SMR" id="Q70RW7"/>
<dbReference type="GeneID" id="2658843"/>
<dbReference type="CTD" id="4539"/>
<dbReference type="GO" id="GO:0005743">
    <property type="term" value="C:mitochondrial inner membrane"/>
    <property type="evidence" value="ECO:0000250"/>
    <property type="project" value="UniProtKB"/>
</dbReference>
<dbReference type="GO" id="GO:0045271">
    <property type="term" value="C:respiratory chain complex I"/>
    <property type="evidence" value="ECO:0000250"/>
    <property type="project" value="UniProtKB"/>
</dbReference>
<dbReference type="GO" id="GO:0008137">
    <property type="term" value="F:NADH dehydrogenase (ubiquinone) activity"/>
    <property type="evidence" value="ECO:0000250"/>
    <property type="project" value="UniProtKB"/>
</dbReference>
<dbReference type="GO" id="GO:0042773">
    <property type="term" value="P:ATP synthesis coupled electron transport"/>
    <property type="evidence" value="ECO:0007669"/>
    <property type="project" value="InterPro"/>
</dbReference>
<dbReference type="FunFam" id="1.10.287.3510:FF:000002">
    <property type="entry name" value="NADH-ubiquinone oxidoreductase chain 4L"/>
    <property type="match status" value="1"/>
</dbReference>
<dbReference type="Gene3D" id="1.10.287.3510">
    <property type="match status" value="1"/>
</dbReference>
<dbReference type="InterPro" id="IPR001133">
    <property type="entry name" value="NADH_UbQ_OxRdtase_chain4L/K"/>
</dbReference>
<dbReference type="InterPro" id="IPR039428">
    <property type="entry name" value="NUOK/Mnh_C1-like"/>
</dbReference>
<dbReference type="PANTHER" id="PTHR11434:SF0">
    <property type="entry name" value="NADH-UBIQUINONE OXIDOREDUCTASE CHAIN 4L"/>
    <property type="match status" value="1"/>
</dbReference>
<dbReference type="PANTHER" id="PTHR11434">
    <property type="entry name" value="NADH-UBIQUINONE OXIDOREDUCTASE SUBUNIT ND4L"/>
    <property type="match status" value="1"/>
</dbReference>
<dbReference type="Pfam" id="PF00420">
    <property type="entry name" value="Oxidored_q2"/>
    <property type="match status" value="1"/>
</dbReference>
<reference key="1">
    <citation type="journal article" date="2004" name="Gene">
        <title>Mitogenomic analyses provide new insights into cetacean origin and evolution.</title>
        <authorList>
            <person name="Arnason U."/>
            <person name="Gullberg A."/>
            <person name="Janke A."/>
        </authorList>
    </citation>
    <scope>NUCLEOTIDE SEQUENCE [GENOMIC DNA]</scope>
</reference>
<sequence length="98" mass="10797">MSLIHMNIIMAFTLSLVGLLMYRSHLMSALLCMEGMMLSLFILATLTALNLHFTLANMMPIILLVFAACEAAIGLALLVKISNTYGTDYVQNLNLLQC</sequence>
<protein>
    <recommendedName>
        <fullName>NADH-ubiquinone oxidoreductase chain 4L</fullName>
        <ecNumber>7.1.1.2</ecNumber>
    </recommendedName>
    <alternativeName>
        <fullName>NADH dehydrogenase subunit 4L</fullName>
    </alternativeName>
</protein>
<evidence type="ECO:0000250" key="1">
    <source>
        <dbReference type="UniProtKB" id="P03901"/>
    </source>
</evidence>
<evidence type="ECO:0000250" key="2">
    <source>
        <dbReference type="UniProtKB" id="P03902"/>
    </source>
</evidence>
<evidence type="ECO:0000255" key="3"/>
<evidence type="ECO:0000305" key="4"/>
<name>NU4LM_HYPAP</name>
<proteinExistence type="inferred from homology"/>
<comment type="function">
    <text evidence="1">Core subunit of the mitochondrial membrane respiratory chain NADH dehydrogenase (Complex I) which catalyzes electron transfer from NADH through the respiratory chain, using ubiquinone as an electron acceptor. Part of the enzyme membrane arm which is embedded in the lipid bilayer and involved in proton translocation.</text>
</comment>
<comment type="catalytic activity">
    <reaction evidence="1">
        <text>a ubiquinone + NADH + 5 H(+)(in) = a ubiquinol + NAD(+) + 4 H(+)(out)</text>
        <dbReference type="Rhea" id="RHEA:29091"/>
        <dbReference type="Rhea" id="RHEA-COMP:9565"/>
        <dbReference type="Rhea" id="RHEA-COMP:9566"/>
        <dbReference type="ChEBI" id="CHEBI:15378"/>
        <dbReference type="ChEBI" id="CHEBI:16389"/>
        <dbReference type="ChEBI" id="CHEBI:17976"/>
        <dbReference type="ChEBI" id="CHEBI:57540"/>
        <dbReference type="ChEBI" id="CHEBI:57945"/>
        <dbReference type="EC" id="7.1.1.2"/>
    </reaction>
    <physiologicalReaction direction="left-to-right" evidence="1">
        <dbReference type="Rhea" id="RHEA:29092"/>
    </physiologicalReaction>
</comment>
<comment type="subunit">
    <text evidence="2">Core subunit of respiratory chain NADH dehydrogenase (Complex I) which is composed of 45 different subunits.</text>
</comment>
<comment type="subcellular location">
    <subcellularLocation>
        <location evidence="2">Mitochondrion inner membrane</location>
        <topology evidence="3">Multi-pass membrane protein</topology>
    </subcellularLocation>
</comment>
<comment type="similarity">
    <text evidence="4">Belongs to the complex I subunit 4L family.</text>
</comment>
<feature type="chain" id="PRO_0000275030" description="NADH-ubiquinone oxidoreductase chain 4L">
    <location>
        <begin position="1"/>
        <end position="98"/>
    </location>
</feature>
<feature type="transmembrane region" description="Helical" evidence="3">
    <location>
        <begin position="1"/>
        <end position="21"/>
    </location>
</feature>
<feature type="transmembrane region" description="Helical" evidence="3">
    <location>
        <begin position="29"/>
        <end position="49"/>
    </location>
</feature>
<feature type="transmembrane region" description="Helical" evidence="3">
    <location>
        <begin position="59"/>
        <end position="79"/>
    </location>
</feature>
<organism>
    <name type="scientific">Hyperoodon ampullatus</name>
    <name type="common">Northern bottlenose whale</name>
    <dbReference type="NCBI Taxonomy" id="48744"/>
    <lineage>
        <taxon>Eukaryota</taxon>
        <taxon>Metazoa</taxon>
        <taxon>Chordata</taxon>
        <taxon>Craniata</taxon>
        <taxon>Vertebrata</taxon>
        <taxon>Euteleostomi</taxon>
        <taxon>Mammalia</taxon>
        <taxon>Eutheria</taxon>
        <taxon>Laurasiatheria</taxon>
        <taxon>Artiodactyla</taxon>
        <taxon>Whippomorpha</taxon>
        <taxon>Cetacea</taxon>
        <taxon>Odontoceti</taxon>
        <taxon>Ziphiidae</taxon>
        <taxon>Hyperoodon</taxon>
    </lineage>
</organism>
<gene>
    <name type="primary">MT-ND4L</name>
    <name type="synonym">MTND4L</name>
    <name type="synonym">NADH4L</name>
    <name type="synonym">ND4L</name>
</gene>
<keyword id="KW-0249">Electron transport</keyword>
<keyword id="KW-0472">Membrane</keyword>
<keyword id="KW-0496">Mitochondrion</keyword>
<keyword id="KW-0999">Mitochondrion inner membrane</keyword>
<keyword id="KW-0520">NAD</keyword>
<keyword id="KW-0679">Respiratory chain</keyword>
<keyword id="KW-1278">Translocase</keyword>
<keyword id="KW-0812">Transmembrane</keyword>
<keyword id="KW-1133">Transmembrane helix</keyword>
<keyword id="KW-0813">Transport</keyword>
<keyword id="KW-0830">Ubiquinone</keyword>